<dbReference type="EC" id="2.7.4.22" evidence="1"/>
<dbReference type="EMBL" id="AJ749949">
    <property type="protein sequence ID" value="CAG44948.1"/>
    <property type="molecule type" value="Genomic_DNA"/>
</dbReference>
<dbReference type="RefSeq" id="WP_003021612.1">
    <property type="nucleotide sequence ID" value="NZ_CP010290.1"/>
</dbReference>
<dbReference type="RefSeq" id="YP_169364.1">
    <property type="nucleotide sequence ID" value="NC_006570.2"/>
</dbReference>
<dbReference type="SMR" id="Q5NHX8"/>
<dbReference type="IntAct" id="Q5NHX8">
    <property type="interactions" value="1"/>
</dbReference>
<dbReference type="STRING" id="177416.FTT_0315"/>
<dbReference type="DNASU" id="3191650"/>
<dbReference type="EnsemblBacteria" id="CAG44948">
    <property type="protein sequence ID" value="CAG44948"/>
    <property type="gene ID" value="FTT_0315"/>
</dbReference>
<dbReference type="GeneID" id="75264271"/>
<dbReference type="KEGG" id="ftu:FTT_0315"/>
<dbReference type="eggNOG" id="COG0528">
    <property type="taxonomic scope" value="Bacteria"/>
</dbReference>
<dbReference type="OrthoDB" id="9807458at2"/>
<dbReference type="UniPathway" id="UPA00159">
    <property type="reaction ID" value="UER00275"/>
</dbReference>
<dbReference type="Proteomes" id="UP000001174">
    <property type="component" value="Chromosome"/>
</dbReference>
<dbReference type="GO" id="GO:0005737">
    <property type="term" value="C:cytoplasm"/>
    <property type="evidence" value="ECO:0007669"/>
    <property type="project" value="UniProtKB-SubCell"/>
</dbReference>
<dbReference type="GO" id="GO:0005524">
    <property type="term" value="F:ATP binding"/>
    <property type="evidence" value="ECO:0007669"/>
    <property type="project" value="UniProtKB-KW"/>
</dbReference>
<dbReference type="GO" id="GO:0033862">
    <property type="term" value="F:UMP kinase activity"/>
    <property type="evidence" value="ECO:0007669"/>
    <property type="project" value="UniProtKB-EC"/>
</dbReference>
<dbReference type="GO" id="GO:0044210">
    <property type="term" value="P:'de novo' CTP biosynthetic process"/>
    <property type="evidence" value="ECO:0007669"/>
    <property type="project" value="UniProtKB-UniRule"/>
</dbReference>
<dbReference type="GO" id="GO:0006225">
    <property type="term" value="P:UDP biosynthetic process"/>
    <property type="evidence" value="ECO:0007669"/>
    <property type="project" value="TreeGrafter"/>
</dbReference>
<dbReference type="CDD" id="cd04254">
    <property type="entry name" value="AAK_UMPK-PyrH-Ec"/>
    <property type="match status" value="1"/>
</dbReference>
<dbReference type="FunFam" id="3.40.1160.10:FF:000001">
    <property type="entry name" value="Uridylate kinase"/>
    <property type="match status" value="1"/>
</dbReference>
<dbReference type="Gene3D" id="3.40.1160.10">
    <property type="entry name" value="Acetylglutamate kinase-like"/>
    <property type="match status" value="1"/>
</dbReference>
<dbReference type="HAMAP" id="MF_01220_B">
    <property type="entry name" value="PyrH_B"/>
    <property type="match status" value="1"/>
</dbReference>
<dbReference type="InterPro" id="IPR036393">
    <property type="entry name" value="AceGlu_kinase-like_sf"/>
</dbReference>
<dbReference type="InterPro" id="IPR001048">
    <property type="entry name" value="Asp/Glu/Uridylate_kinase"/>
</dbReference>
<dbReference type="InterPro" id="IPR011817">
    <property type="entry name" value="Uridylate_kinase"/>
</dbReference>
<dbReference type="InterPro" id="IPR015963">
    <property type="entry name" value="Uridylate_kinase_bac"/>
</dbReference>
<dbReference type="NCBIfam" id="TIGR02075">
    <property type="entry name" value="pyrH_bact"/>
    <property type="match status" value="1"/>
</dbReference>
<dbReference type="PANTHER" id="PTHR42833">
    <property type="entry name" value="URIDYLATE KINASE"/>
    <property type="match status" value="1"/>
</dbReference>
<dbReference type="PANTHER" id="PTHR42833:SF4">
    <property type="entry name" value="URIDYLATE KINASE PUMPKIN, CHLOROPLASTIC"/>
    <property type="match status" value="1"/>
</dbReference>
<dbReference type="Pfam" id="PF00696">
    <property type="entry name" value="AA_kinase"/>
    <property type="match status" value="1"/>
</dbReference>
<dbReference type="PIRSF" id="PIRSF005650">
    <property type="entry name" value="Uridylate_kin"/>
    <property type="match status" value="1"/>
</dbReference>
<dbReference type="SUPFAM" id="SSF53633">
    <property type="entry name" value="Carbamate kinase-like"/>
    <property type="match status" value="1"/>
</dbReference>
<keyword id="KW-0067">ATP-binding</keyword>
<keyword id="KW-0963">Cytoplasm</keyword>
<keyword id="KW-0418">Kinase</keyword>
<keyword id="KW-0547">Nucleotide-binding</keyword>
<keyword id="KW-0665">Pyrimidine biosynthesis</keyword>
<keyword id="KW-1185">Reference proteome</keyword>
<keyword id="KW-0808">Transferase</keyword>
<sequence>MSNDSSECSQKLPKLKRILLKLSGESLSADQGFGINVESAQPIINQIKTLTNFGVELALVVGGGNILRGGRANFGNKIRRATADSMGMIATMINALALRDMLISEGVDAEVFSAKGVDGLLKVASAHEFNQELAKGRVLIFAGGTGNPFVTTDTTASLRAVEIGADALLKATTVNGVYDKDPNKYSDAKRFDKVTFSEVVSKELNVMDLGAFTQCRDFGIPIYVFDLTQPNALVDAVLDSKYGTWVTLD</sequence>
<reference key="1">
    <citation type="journal article" date="2005" name="Nat. Genet.">
        <title>The complete genome sequence of Francisella tularensis, the causative agent of tularemia.</title>
        <authorList>
            <person name="Larsson P."/>
            <person name="Oyston P.C.F."/>
            <person name="Chain P."/>
            <person name="Chu M.C."/>
            <person name="Duffield M."/>
            <person name="Fuxelius H.-H."/>
            <person name="Garcia E."/>
            <person name="Haelltorp G."/>
            <person name="Johansson D."/>
            <person name="Isherwood K.E."/>
            <person name="Karp P.D."/>
            <person name="Larsson E."/>
            <person name="Liu Y."/>
            <person name="Michell S."/>
            <person name="Prior J."/>
            <person name="Prior R."/>
            <person name="Malfatti S."/>
            <person name="Sjoestedt A."/>
            <person name="Svensson K."/>
            <person name="Thompson N."/>
            <person name="Vergez L."/>
            <person name="Wagg J.K."/>
            <person name="Wren B.W."/>
            <person name="Lindler L.E."/>
            <person name="Andersson S.G.E."/>
            <person name="Forsman M."/>
            <person name="Titball R.W."/>
        </authorList>
    </citation>
    <scope>NUCLEOTIDE SEQUENCE [LARGE SCALE GENOMIC DNA]</scope>
    <source>
        <strain>SCHU S4 / Schu 4</strain>
    </source>
</reference>
<proteinExistence type="inferred from homology"/>
<name>PYRH_FRATT</name>
<protein>
    <recommendedName>
        <fullName evidence="1">Uridylate kinase</fullName>
        <shortName evidence="1">UK</shortName>
        <ecNumber evidence="1">2.7.4.22</ecNumber>
    </recommendedName>
    <alternativeName>
        <fullName evidence="1">Uridine monophosphate kinase</fullName>
        <shortName evidence="1">UMP kinase</shortName>
        <shortName evidence="1">UMPK</shortName>
    </alternativeName>
</protein>
<accession>Q5NHX8</accession>
<feature type="chain" id="PRO_0000323852" description="Uridylate kinase">
    <location>
        <begin position="1"/>
        <end position="249"/>
    </location>
</feature>
<feature type="binding site" evidence="1">
    <location>
        <begin position="21"/>
        <end position="24"/>
    </location>
    <ligand>
        <name>ATP</name>
        <dbReference type="ChEBI" id="CHEBI:30616"/>
    </ligand>
</feature>
<feature type="binding site" evidence="1">
    <location>
        <position position="63"/>
    </location>
    <ligand>
        <name>UMP</name>
        <dbReference type="ChEBI" id="CHEBI:57865"/>
    </ligand>
</feature>
<feature type="binding site" evidence="1">
    <location>
        <position position="64"/>
    </location>
    <ligand>
        <name>ATP</name>
        <dbReference type="ChEBI" id="CHEBI:30616"/>
    </ligand>
</feature>
<feature type="binding site" evidence="1">
    <location>
        <position position="68"/>
    </location>
    <ligand>
        <name>ATP</name>
        <dbReference type="ChEBI" id="CHEBI:30616"/>
    </ligand>
</feature>
<feature type="binding site" evidence="1">
    <location>
        <position position="84"/>
    </location>
    <ligand>
        <name>UMP</name>
        <dbReference type="ChEBI" id="CHEBI:57865"/>
    </ligand>
</feature>
<feature type="binding site" evidence="1">
    <location>
        <begin position="145"/>
        <end position="152"/>
    </location>
    <ligand>
        <name>UMP</name>
        <dbReference type="ChEBI" id="CHEBI:57865"/>
    </ligand>
</feature>
<feature type="binding site" evidence="1">
    <location>
        <position position="172"/>
    </location>
    <ligand>
        <name>ATP</name>
        <dbReference type="ChEBI" id="CHEBI:30616"/>
    </ligand>
</feature>
<feature type="binding site" evidence="1">
    <location>
        <position position="178"/>
    </location>
    <ligand>
        <name>ATP</name>
        <dbReference type="ChEBI" id="CHEBI:30616"/>
    </ligand>
</feature>
<feature type="binding site" evidence="1">
    <location>
        <position position="181"/>
    </location>
    <ligand>
        <name>ATP</name>
        <dbReference type="ChEBI" id="CHEBI:30616"/>
    </ligand>
</feature>
<evidence type="ECO:0000255" key="1">
    <source>
        <dbReference type="HAMAP-Rule" id="MF_01220"/>
    </source>
</evidence>
<gene>
    <name evidence="1" type="primary">pyrH</name>
    <name type="ordered locus">FTT_0315</name>
</gene>
<comment type="function">
    <text evidence="1">Catalyzes the reversible phosphorylation of UMP to UDP.</text>
</comment>
<comment type="catalytic activity">
    <reaction evidence="1">
        <text>UMP + ATP = UDP + ADP</text>
        <dbReference type="Rhea" id="RHEA:24400"/>
        <dbReference type="ChEBI" id="CHEBI:30616"/>
        <dbReference type="ChEBI" id="CHEBI:57865"/>
        <dbReference type="ChEBI" id="CHEBI:58223"/>
        <dbReference type="ChEBI" id="CHEBI:456216"/>
        <dbReference type="EC" id="2.7.4.22"/>
    </reaction>
</comment>
<comment type="activity regulation">
    <text evidence="1">Inhibited by UTP.</text>
</comment>
<comment type="pathway">
    <text evidence="1">Pyrimidine metabolism; CTP biosynthesis via de novo pathway; UDP from UMP (UMPK route): step 1/1.</text>
</comment>
<comment type="subunit">
    <text evidence="1">Homohexamer.</text>
</comment>
<comment type="subcellular location">
    <subcellularLocation>
        <location evidence="1">Cytoplasm</location>
    </subcellularLocation>
</comment>
<comment type="similarity">
    <text evidence="1">Belongs to the UMP kinase family.</text>
</comment>
<organism>
    <name type="scientific">Francisella tularensis subsp. tularensis (strain SCHU S4 / Schu 4)</name>
    <dbReference type="NCBI Taxonomy" id="177416"/>
    <lineage>
        <taxon>Bacteria</taxon>
        <taxon>Pseudomonadati</taxon>
        <taxon>Pseudomonadota</taxon>
        <taxon>Gammaproteobacteria</taxon>
        <taxon>Thiotrichales</taxon>
        <taxon>Francisellaceae</taxon>
        <taxon>Francisella</taxon>
    </lineage>
</organism>